<comment type="function">
    <text evidence="1">Catalyzes the reversible cyclization of carbamoyl aspartate to dihydroorotate.</text>
</comment>
<comment type="catalytic activity">
    <reaction evidence="1">
        <text>(S)-dihydroorotate + H2O = N-carbamoyl-L-aspartate + H(+)</text>
        <dbReference type="Rhea" id="RHEA:24296"/>
        <dbReference type="ChEBI" id="CHEBI:15377"/>
        <dbReference type="ChEBI" id="CHEBI:15378"/>
        <dbReference type="ChEBI" id="CHEBI:30864"/>
        <dbReference type="ChEBI" id="CHEBI:32814"/>
        <dbReference type="EC" id="3.5.2.3"/>
    </reaction>
</comment>
<comment type="cofactor">
    <cofactor evidence="1">
        <name>Zn(2+)</name>
        <dbReference type="ChEBI" id="CHEBI:29105"/>
    </cofactor>
    <text evidence="1">Binds 2 Zn(2+) ions per subunit.</text>
</comment>
<comment type="pathway">
    <text evidence="1">Pyrimidine metabolism; UMP biosynthesis via de novo pathway; (S)-dihydroorotate from bicarbonate: step 3/3.</text>
</comment>
<comment type="similarity">
    <text evidence="1">Belongs to the metallo-dependent hydrolases superfamily. DHOase family. Class I DHOase subfamily.</text>
</comment>
<evidence type="ECO:0000255" key="1">
    <source>
        <dbReference type="HAMAP-Rule" id="MF_00220"/>
    </source>
</evidence>
<reference key="1">
    <citation type="journal article" date="2004" name="Nucleic Acids Res.">
        <title>The genome sequence of Bacillus cereus ATCC 10987 reveals metabolic adaptations and a large plasmid related to Bacillus anthracis pXO1.</title>
        <authorList>
            <person name="Rasko D.A."/>
            <person name="Ravel J."/>
            <person name="Oekstad O.A."/>
            <person name="Helgason E."/>
            <person name="Cer R.Z."/>
            <person name="Jiang L."/>
            <person name="Shores K.A."/>
            <person name="Fouts D.E."/>
            <person name="Tourasse N.J."/>
            <person name="Angiuoli S.V."/>
            <person name="Kolonay J.F."/>
            <person name="Nelson W.C."/>
            <person name="Kolstoe A.-B."/>
            <person name="Fraser C.M."/>
            <person name="Read T.D."/>
        </authorList>
    </citation>
    <scope>NUCLEOTIDE SEQUENCE [LARGE SCALE GENOMIC DNA]</scope>
    <source>
        <strain>ATCC 10987 / NRS 248</strain>
    </source>
</reference>
<accession>Q732I1</accession>
<name>PYRC_BACC1</name>
<organism>
    <name type="scientific">Bacillus cereus (strain ATCC 10987 / NRS 248)</name>
    <dbReference type="NCBI Taxonomy" id="222523"/>
    <lineage>
        <taxon>Bacteria</taxon>
        <taxon>Bacillati</taxon>
        <taxon>Bacillota</taxon>
        <taxon>Bacilli</taxon>
        <taxon>Bacillales</taxon>
        <taxon>Bacillaceae</taxon>
        <taxon>Bacillus</taxon>
        <taxon>Bacillus cereus group</taxon>
    </lineage>
</organism>
<keyword id="KW-0378">Hydrolase</keyword>
<keyword id="KW-0479">Metal-binding</keyword>
<keyword id="KW-0665">Pyrimidine biosynthesis</keyword>
<keyword id="KW-0862">Zinc</keyword>
<proteinExistence type="inferred from homology"/>
<protein>
    <recommendedName>
        <fullName evidence="1">Dihydroorotase</fullName>
        <shortName evidence="1">DHOase</shortName>
        <ecNumber evidence="1">3.5.2.3</ecNumber>
    </recommendedName>
</protein>
<gene>
    <name evidence="1" type="primary">pyrC</name>
    <name type="ordered locus">BCE_3933</name>
</gene>
<sequence>MNYLFKNGRYMNEEGKIVATDLLVQDGKIAKVAENITADNAEVIDVNGKLIAPGLVDVHVHLREPGGEHKETIETGTLAAAKGGFTTICAMPNTRPVPDCREHMEDLQNRIKEKAHVNVLPYGAITVRQAGSEMTDFETLKELGAFAFTDDGVGVQDASMMLAAMKRAAKLNMAVVAHCEENTLINKGCVHEGKFSEKHGLNGIPSVCESVHIARDILLAEAADCHYHVCHVSTKGSVRVIRDAKRAGIKVTAEVTPHHLVLCEDDIPSADPNFKMNPPLRGKEDHAALIEGLLDGTIDMIATDHAPHTAEEKAQGIERAPFGITGFETAFPLLYTNLVKKGIITLEQLIQFLTEKPADTFGLEAGRLKEGRAADITIIDLEQEEEIDPTTFLSKGKNTPFAGWKCQGWPVMTIVGGKIAWQKESALV</sequence>
<feature type="chain" id="PRO_0000325583" description="Dihydroorotase">
    <location>
        <begin position="1"/>
        <end position="428"/>
    </location>
</feature>
<feature type="active site" evidence="1">
    <location>
        <position position="304"/>
    </location>
</feature>
<feature type="binding site" evidence="1">
    <location>
        <position position="59"/>
    </location>
    <ligand>
        <name>Zn(2+)</name>
        <dbReference type="ChEBI" id="CHEBI:29105"/>
        <label>1</label>
    </ligand>
</feature>
<feature type="binding site" evidence="1">
    <location>
        <begin position="61"/>
        <end position="63"/>
    </location>
    <ligand>
        <name>substrate</name>
    </ligand>
</feature>
<feature type="binding site" evidence="1">
    <location>
        <position position="61"/>
    </location>
    <ligand>
        <name>Zn(2+)</name>
        <dbReference type="ChEBI" id="CHEBI:29105"/>
        <label>1</label>
    </ligand>
</feature>
<feature type="binding site" evidence="1">
    <location>
        <position position="93"/>
    </location>
    <ligand>
        <name>substrate</name>
    </ligand>
</feature>
<feature type="binding site" evidence="1">
    <location>
        <position position="151"/>
    </location>
    <ligand>
        <name>Zn(2+)</name>
        <dbReference type="ChEBI" id="CHEBI:29105"/>
        <label>1</label>
    </ligand>
</feature>
<feature type="binding site" evidence="1">
    <location>
        <position position="151"/>
    </location>
    <ligand>
        <name>Zn(2+)</name>
        <dbReference type="ChEBI" id="CHEBI:29105"/>
        <label>2</label>
    </ligand>
</feature>
<feature type="binding site" evidence="1">
    <location>
        <position position="178"/>
    </location>
    <ligand>
        <name>Zn(2+)</name>
        <dbReference type="ChEBI" id="CHEBI:29105"/>
        <label>2</label>
    </ligand>
</feature>
<feature type="binding site" evidence="1">
    <location>
        <position position="231"/>
    </location>
    <ligand>
        <name>Zn(2+)</name>
        <dbReference type="ChEBI" id="CHEBI:29105"/>
        <label>2</label>
    </ligand>
</feature>
<feature type="binding site" evidence="1">
    <location>
        <position position="277"/>
    </location>
    <ligand>
        <name>substrate</name>
    </ligand>
</feature>
<feature type="binding site" evidence="1">
    <location>
        <position position="304"/>
    </location>
    <ligand>
        <name>Zn(2+)</name>
        <dbReference type="ChEBI" id="CHEBI:29105"/>
        <label>1</label>
    </ligand>
</feature>
<feature type="binding site" evidence="1">
    <location>
        <position position="308"/>
    </location>
    <ligand>
        <name>substrate</name>
    </ligand>
</feature>
<feature type="binding site" evidence="1">
    <location>
        <begin position="322"/>
        <end position="323"/>
    </location>
    <ligand>
        <name>substrate</name>
    </ligand>
</feature>
<dbReference type="EC" id="3.5.2.3" evidence="1"/>
<dbReference type="EMBL" id="AE017194">
    <property type="protein sequence ID" value="AAS42836.1"/>
    <property type="molecule type" value="Genomic_DNA"/>
</dbReference>
<dbReference type="SMR" id="Q732I1"/>
<dbReference type="KEGG" id="bca:BCE_3933"/>
<dbReference type="HOGENOM" id="CLU_015572_1_0_9"/>
<dbReference type="UniPathway" id="UPA00070">
    <property type="reaction ID" value="UER00117"/>
</dbReference>
<dbReference type="Proteomes" id="UP000002527">
    <property type="component" value="Chromosome"/>
</dbReference>
<dbReference type="GO" id="GO:0005737">
    <property type="term" value="C:cytoplasm"/>
    <property type="evidence" value="ECO:0007669"/>
    <property type="project" value="TreeGrafter"/>
</dbReference>
<dbReference type="GO" id="GO:0004038">
    <property type="term" value="F:allantoinase activity"/>
    <property type="evidence" value="ECO:0007669"/>
    <property type="project" value="TreeGrafter"/>
</dbReference>
<dbReference type="GO" id="GO:0004151">
    <property type="term" value="F:dihydroorotase activity"/>
    <property type="evidence" value="ECO:0007669"/>
    <property type="project" value="UniProtKB-UniRule"/>
</dbReference>
<dbReference type="GO" id="GO:0008270">
    <property type="term" value="F:zinc ion binding"/>
    <property type="evidence" value="ECO:0007669"/>
    <property type="project" value="UniProtKB-UniRule"/>
</dbReference>
<dbReference type="GO" id="GO:0044205">
    <property type="term" value="P:'de novo' UMP biosynthetic process"/>
    <property type="evidence" value="ECO:0007669"/>
    <property type="project" value="UniProtKB-UniRule"/>
</dbReference>
<dbReference type="GO" id="GO:0006145">
    <property type="term" value="P:purine nucleobase catabolic process"/>
    <property type="evidence" value="ECO:0007669"/>
    <property type="project" value="TreeGrafter"/>
</dbReference>
<dbReference type="CDD" id="cd01317">
    <property type="entry name" value="DHOase_IIa"/>
    <property type="match status" value="1"/>
</dbReference>
<dbReference type="FunFam" id="2.30.40.10:FF:000007">
    <property type="entry name" value="Dihydroorotase"/>
    <property type="match status" value="1"/>
</dbReference>
<dbReference type="FunFam" id="3.20.20.140:FF:000025">
    <property type="entry name" value="Dihydroorotase"/>
    <property type="match status" value="1"/>
</dbReference>
<dbReference type="Gene3D" id="3.20.20.140">
    <property type="entry name" value="Metal-dependent hydrolases"/>
    <property type="match status" value="1"/>
</dbReference>
<dbReference type="Gene3D" id="2.30.40.10">
    <property type="entry name" value="Urease, subunit C, domain 1"/>
    <property type="match status" value="2"/>
</dbReference>
<dbReference type="HAMAP" id="MF_00220_B">
    <property type="entry name" value="PyrC_classI_B"/>
    <property type="match status" value="1"/>
</dbReference>
<dbReference type="InterPro" id="IPR006680">
    <property type="entry name" value="Amidohydro-rel"/>
</dbReference>
<dbReference type="InterPro" id="IPR004722">
    <property type="entry name" value="DHOase"/>
</dbReference>
<dbReference type="InterPro" id="IPR050138">
    <property type="entry name" value="DHOase/Allantoinase_Hydrolase"/>
</dbReference>
<dbReference type="InterPro" id="IPR002195">
    <property type="entry name" value="Dihydroorotase_CS"/>
</dbReference>
<dbReference type="InterPro" id="IPR011059">
    <property type="entry name" value="Metal-dep_hydrolase_composite"/>
</dbReference>
<dbReference type="InterPro" id="IPR032466">
    <property type="entry name" value="Metal_Hydrolase"/>
</dbReference>
<dbReference type="NCBIfam" id="NF006837">
    <property type="entry name" value="PRK09357.1-2"/>
    <property type="match status" value="1"/>
</dbReference>
<dbReference type="NCBIfam" id="TIGR00857">
    <property type="entry name" value="pyrC_multi"/>
    <property type="match status" value="1"/>
</dbReference>
<dbReference type="PANTHER" id="PTHR43668">
    <property type="entry name" value="ALLANTOINASE"/>
    <property type="match status" value="1"/>
</dbReference>
<dbReference type="PANTHER" id="PTHR43668:SF2">
    <property type="entry name" value="ALLANTOINASE"/>
    <property type="match status" value="1"/>
</dbReference>
<dbReference type="Pfam" id="PF01979">
    <property type="entry name" value="Amidohydro_1"/>
    <property type="match status" value="1"/>
</dbReference>
<dbReference type="SUPFAM" id="SSF51338">
    <property type="entry name" value="Composite domain of metallo-dependent hydrolases"/>
    <property type="match status" value="1"/>
</dbReference>
<dbReference type="SUPFAM" id="SSF51556">
    <property type="entry name" value="Metallo-dependent hydrolases"/>
    <property type="match status" value="1"/>
</dbReference>
<dbReference type="PROSITE" id="PS00482">
    <property type="entry name" value="DIHYDROOROTASE_1"/>
    <property type="match status" value="1"/>
</dbReference>
<dbReference type="PROSITE" id="PS00483">
    <property type="entry name" value="DIHYDROOROTASE_2"/>
    <property type="match status" value="1"/>
</dbReference>